<protein>
    <recommendedName>
        <fullName>Uncharacterized protein TP_0359</fullName>
    </recommendedName>
</protein>
<gene>
    <name type="ordered locus">TP_0359</name>
</gene>
<accession>O83378</accession>
<name>Y359_TREPA</name>
<reference key="1">
    <citation type="journal article" date="1998" name="Science">
        <title>Complete genome sequence of Treponema pallidum, the syphilis spirochete.</title>
        <authorList>
            <person name="Fraser C.M."/>
            <person name="Norris S.J."/>
            <person name="Weinstock G.M."/>
            <person name="White O."/>
            <person name="Sutton G.G."/>
            <person name="Dodson R.J."/>
            <person name="Gwinn M.L."/>
            <person name="Hickey E.K."/>
            <person name="Clayton R.A."/>
            <person name="Ketchum K.A."/>
            <person name="Sodergren E."/>
            <person name="Hardham J.M."/>
            <person name="McLeod M.P."/>
            <person name="Salzberg S.L."/>
            <person name="Peterson J.D."/>
            <person name="Khalak H.G."/>
            <person name="Richardson D.L."/>
            <person name="Howell J.K."/>
            <person name="Chidambaram M."/>
            <person name="Utterback T.R."/>
            <person name="McDonald L.A."/>
            <person name="Artiach P."/>
            <person name="Bowman C."/>
            <person name="Cotton M.D."/>
            <person name="Fujii C."/>
            <person name="Garland S.A."/>
            <person name="Hatch B."/>
            <person name="Horst K."/>
            <person name="Roberts K.M."/>
            <person name="Sandusky M."/>
            <person name="Weidman J.F."/>
            <person name="Smith H.O."/>
            <person name="Venter J.C."/>
        </authorList>
    </citation>
    <scope>NUCLEOTIDE SEQUENCE [LARGE SCALE GENOMIC DNA]</scope>
    <source>
        <strain>Nichols</strain>
    </source>
</reference>
<organism>
    <name type="scientific">Treponema pallidum (strain Nichols)</name>
    <dbReference type="NCBI Taxonomy" id="243276"/>
    <lineage>
        <taxon>Bacteria</taxon>
        <taxon>Pseudomonadati</taxon>
        <taxon>Spirochaetota</taxon>
        <taxon>Spirochaetia</taxon>
        <taxon>Spirochaetales</taxon>
        <taxon>Treponemataceae</taxon>
        <taxon>Treponema</taxon>
    </lineage>
</organism>
<proteinExistence type="predicted"/>
<feature type="chain" id="PRO_0000202241" description="Uncharacterized protein TP_0359">
    <location>
        <begin position="1"/>
        <end position="211"/>
    </location>
</feature>
<sequence>MALTKSFLESRSTGELFALADELGLCLPEDLNRRLVIGEILDCYHSALDLNPPCAPQSLESKGTSCAYNTTEIHILARDPLWFFVFWDIHEQLFCTLTQSPQFRSFFLRVHSLGGHGWHTSLDHFDIDVPLKDRKRYVHLSLADDANRIDLCCKMLQRERILAQSRVVTLQRSVIERSLNPEDPTGAEVLSLCGLPLLEETYPSTSLPVCS</sequence>
<keyword id="KW-1185">Reference proteome</keyword>
<dbReference type="EMBL" id="AE000520">
    <property type="protein sequence ID" value="AAC65354.1"/>
    <property type="molecule type" value="Genomic_DNA"/>
</dbReference>
<dbReference type="PIR" id="E71334">
    <property type="entry name" value="E71334"/>
</dbReference>
<dbReference type="RefSeq" id="WP_010881807.1">
    <property type="nucleotide sequence ID" value="NC_021490.2"/>
</dbReference>
<dbReference type="SMR" id="O83378"/>
<dbReference type="IntAct" id="O83378">
    <property type="interactions" value="35"/>
</dbReference>
<dbReference type="STRING" id="243276.TP_0359"/>
<dbReference type="EnsemblBacteria" id="AAC65354">
    <property type="protein sequence ID" value="AAC65354"/>
    <property type="gene ID" value="TP_0359"/>
</dbReference>
<dbReference type="KEGG" id="tpa:TP_0359"/>
<dbReference type="KEGG" id="tpw:TPANIC_0359"/>
<dbReference type="eggNOG" id="COG3330">
    <property type="taxonomic scope" value="Bacteria"/>
</dbReference>
<dbReference type="HOGENOM" id="CLU_100589_0_0_12"/>
<dbReference type="OrthoDB" id="9812700at2"/>
<dbReference type="Proteomes" id="UP000000811">
    <property type="component" value="Chromosome"/>
</dbReference>
<dbReference type="InterPro" id="IPR032585">
    <property type="entry name" value="DUF4912"/>
</dbReference>
<dbReference type="Pfam" id="PF16258">
    <property type="entry name" value="DUF4912"/>
    <property type="match status" value="1"/>
</dbReference>